<reference key="1">
    <citation type="journal article" date="1997" name="Nature">
        <title>The nucleotide sequence of Saccharomyces cerevisiae chromosome XVI.</title>
        <authorList>
            <person name="Bussey H."/>
            <person name="Storms R.K."/>
            <person name="Ahmed A."/>
            <person name="Albermann K."/>
            <person name="Allen E."/>
            <person name="Ansorge W."/>
            <person name="Araujo R."/>
            <person name="Aparicio A."/>
            <person name="Barrell B.G."/>
            <person name="Badcock K."/>
            <person name="Benes V."/>
            <person name="Botstein D."/>
            <person name="Bowman S."/>
            <person name="Brueckner M."/>
            <person name="Carpenter J."/>
            <person name="Cherry J.M."/>
            <person name="Chung E."/>
            <person name="Churcher C.M."/>
            <person name="Coster F."/>
            <person name="Davis K."/>
            <person name="Davis R.W."/>
            <person name="Dietrich F.S."/>
            <person name="Delius H."/>
            <person name="DiPaolo T."/>
            <person name="Dubois E."/>
            <person name="Duesterhoeft A."/>
            <person name="Duncan M."/>
            <person name="Floeth M."/>
            <person name="Fortin N."/>
            <person name="Friesen J.D."/>
            <person name="Fritz C."/>
            <person name="Goffeau A."/>
            <person name="Hall J."/>
            <person name="Hebling U."/>
            <person name="Heumann K."/>
            <person name="Hilbert H."/>
            <person name="Hillier L.W."/>
            <person name="Hunicke-Smith S."/>
            <person name="Hyman R.W."/>
            <person name="Johnston M."/>
            <person name="Kalman S."/>
            <person name="Kleine K."/>
            <person name="Komp C."/>
            <person name="Kurdi O."/>
            <person name="Lashkari D."/>
            <person name="Lew H."/>
            <person name="Lin A."/>
            <person name="Lin D."/>
            <person name="Louis E.J."/>
            <person name="Marathe R."/>
            <person name="Messenguy F."/>
            <person name="Mewes H.-W."/>
            <person name="Mirtipati S."/>
            <person name="Moestl D."/>
            <person name="Mueller-Auer S."/>
            <person name="Namath A."/>
            <person name="Nentwich U."/>
            <person name="Oefner P."/>
            <person name="Pearson D."/>
            <person name="Petel F.X."/>
            <person name="Pohl T.M."/>
            <person name="Purnelle B."/>
            <person name="Rajandream M.A."/>
            <person name="Rechmann S."/>
            <person name="Rieger M."/>
            <person name="Riles L."/>
            <person name="Roberts D."/>
            <person name="Schaefer M."/>
            <person name="Scharfe M."/>
            <person name="Scherens B."/>
            <person name="Schramm S."/>
            <person name="Schroeder M."/>
            <person name="Sdicu A.-M."/>
            <person name="Tettelin H."/>
            <person name="Urrestarazu L.A."/>
            <person name="Ushinsky S."/>
            <person name="Vierendeels F."/>
            <person name="Vissers S."/>
            <person name="Voss H."/>
            <person name="Walsh S.V."/>
            <person name="Wambutt R."/>
            <person name="Wang Y."/>
            <person name="Wedler E."/>
            <person name="Wedler H."/>
            <person name="Winnett E."/>
            <person name="Zhong W.-W."/>
            <person name="Zollner A."/>
            <person name="Vo D.H."/>
            <person name="Hani J."/>
        </authorList>
    </citation>
    <scope>NUCLEOTIDE SEQUENCE [LARGE SCALE GENOMIC DNA]</scope>
    <source>
        <strain>ATCC 204508 / S288c</strain>
    </source>
</reference>
<reference key="2">
    <citation type="journal article" date="2014" name="G3 (Bethesda)">
        <title>The reference genome sequence of Saccharomyces cerevisiae: Then and now.</title>
        <authorList>
            <person name="Engel S.R."/>
            <person name="Dietrich F.S."/>
            <person name="Fisk D.G."/>
            <person name="Binkley G."/>
            <person name="Balakrishnan R."/>
            <person name="Costanzo M.C."/>
            <person name="Dwight S.S."/>
            <person name="Hitz B.C."/>
            <person name="Karra K."/>
            <person name="Nash R.S."/>
            <person name="Weng S."/>
            <person name="Wong E.D."/>
            <person name="Lloyd P."/>
            <person name="Skrzypek M.S."/>
            <person name="Miyasato S.R."/>
            <person name="Simison M."/>
            <person name="Cherry J.M."/>
        </authorList>
    </citation>
    <scope>GENOME REANNOTATION</scope>
    <source>
        <strain>ATCC 204508 / S288c</strain>
    </source>
</reference>
<reference key="3">
    <citation type="journal article" date="2000" name="Mol. Gen. Genet.">
        <title>Multiple copies of MRG19 suppress transcription of the GAL1 promoter in a GAL80-dependent manner in Saccharomyces cerevisiae.</title>
        <authorList>
            <person name="Kabir M.A."/>
            <person name="Khanday F.A."/>
            <person name="Mehta D.V."/>
            <person name="Bhat P.J."/>
        </authorList>
    </citation>
    <scope>FUNCTION</scope>
</reference>
<reference key="4">
    <citation type="journal article" date="2000" name="Mol. Biol. Cell">
        <title>Sbe2p and sbe22p, two homologous Golgi proteins involved in yeast cell wall formation.</title>
        <authorList>
            <person name="Santos B."/>
            <person name="Snyder M."/>
        </authorList>
    </citation>
    <scope>FUNCTION</scope>
</reference>
<reference key="5">
    <citation type="journal article" date="2002" name="Eur. J. Biochem.">
        <title>Molecular characterization of MRG19 of Saccharomyces cerevisiae. Implication in the regulation of galactose and nonfermentable carbon source utilization.</title>
        <authorList>
            <person name="Khanday F.A."/>
            <person name="Saha M."/>
            <person name="Bhat P.J."/>
        </authorList>
    </citation>
    <scope>FUNCTION</scope>
    <scope>INDUCTION</scope>
    <scope>SUBCELLULAR LOCATION</scope>
</reference>
<reference key="6">
    <citation type="journal article" date="2003" name="Nature">
        <title>Targets of the cyclin-dependent kinase Cdk1.</title>
        <authorList>
            <person name="Ubersax J.A."/>
            <person name="Woodbury E.L."/>
            <person name="Quang P.N."/>
            <person name="Paraz M."/>
            <person name="Blethrow J.D."/>
            <person name="Shah K."/>
            <person name="Shokat K.M."/>
            <person name="Morgan D.O."/>
        </authorList>
    </citation>
    <scope>PHOSPHORYLATION BY CDC28</scope>
</reference>
<reference key="7">
    <citation type="journal article" date="2003" name="Nat. Biotechnol.">
        <title>A proteomics approach to understanding protein ubiquitination.</title>
        <authorList>
            <person name="Peng J."/>
            <person name="Schwartz D."/>
            <person name="Elias J.E."/>
            <person name="Thoreen C.C."/>
            <person name="Cheng D."/>
            <person name="Marsischky G."/>
            <person name="Roelofs J."/>
            <person name="Finley D."/>
            <person name="Gygi S.P."/>
        </authorList>
    </citation>
    <scope>UBIQUITINATION [LARGE SCALE ANALYSIS] AT LYS-841</scope>
    <scope>IDENTIFICATION BY MASS SPECTROMETRY</scope>
    <source>
        <strain>SUB592</strain>
    </source>
</reference>
<reference key="8">
    <citation type="journal article" date="2005" name="FEBS Lett.">
        <title>Mrg19 depletion increases S. cerevisiae lifespan by augmenting ROS defence.</title>
        <authorList>
            <person name="Kharade S.V."/>
            <person name="Mittal N."/>
            <person name="Das S.P."/>
            <person name="Sinha P."/>
            <person name="Roy N."/>
        </authorList>
    </citation>
    <scope>FUNCTION</scope>
</reference>
<reference key="9">
    <citation type="journal article" date="2005" name="Microbiology">
        <title>Disruption of MRG19 results in altered nitrogen metabolic status and defective pseudohyphal development in Saccharomyces cerevisiae.</title>
        <authorList>
            <person name="Das M."/>
            <person name="Bhat P.J."/>
        </authorList>
    </citation>
    <scope>FUNCTION</scope>
    <scope>INDUCTION</scope>
</reference>
<reference key="10">
    <citation type="journal article" date="2009" name="Science">
        <title>Global analysis of Cdk1 substrate phosphorylation sites provides insights into evolution.</title>
        <authorList>
            <person name="Holt L.J."/>
            <person name="Tuch B.B."/>
            <person name="Villen J."/>
            <person name="Johnson A.D."/>
            <person name="Gygi S.P."/>
            <person name="Morgan D.O."/>
        </authorList>
    </citation>
    <scope>PHOSPHORYLATION [LARGE SCALE ANALYSIS] AT SER-23; SER-46; SER-127; SER-327 AND SER-987</scope>
    <scope>IDENTIFICATION BY MASS SPECTROMETRY [LARGE SCALE ANALYSIS]</scope>
</reference>
<reference key="11">
    <citation type="journal article" date="2012" name="Proc. Natl. Acad. Sci. U.S.A.">
        <title>N-terminal acetylome analyses and functional insights of the N-terminal acetyltransferase NatB.</title>
        <authorList>
            <person name="Van Damme P."/>
            <person name="Lasa M."/>
            <person name="Polevoda B."/>
            <person name="Gazquez C."/>
            <person name="Elosegui-Artola A."/>
            <person name="Kim D.S."/>
            <person name="De Juan-Pardo E."/>
            <person name="Demeyer K."/>
            <person name="Hole K."/>
            <person name="Larrea E."/>
            <person name="Timmerman E."/>
            <person name="Prieto J."/>
            <person name="Arnesen T."/>
            <person name="Sherman F."/>
            <person name="Gevaert K."/>
            <person name="Aldabe R."/>
        </authorList>
    </citation>
    <scope>IDENTIFICATION BY MASS SPECTROMETRY [LARGE SCALE ANALYSIS]</scope>
</reference>
<dbReference type="EMBL" id="Z71255">
    <property type="protein sequence ID" value="CAA95026.1"/>
    <property type="molecule type" value="Genomic_DNA"/>
</dbReference>
<dbReference type="EMBL" id="Z49274">
    <property type="protein sequence ID" value="CAA89284.1"/>
    <property type="molecule type" value="Genomic_DNA"/>
</dbReference>
<dbReference type="EMBL" id="BK006949">
    <property type="protein sequence ID" value="DAA11456.1"/>
    <property type="molecule type" value="Genomic_DNA"/>
</dbReference>
<dbReference type="PIR" id="S54504">
    <property type="entry name" value="S54504"/>
</dbReference>
<dbReference type="RefSeq" id="NP_015355.1">
    <property type="nucleotide sequence ID" value="NM_001184127.1"/>
</dbReference>
<dbReference type="BioGRID" id="36208">
    <property type="interactions" value="164"/>
</dbReference>
<dbReference type="DIP" id="DIP-3911N"/>
<dbReference type="FunCoup" id="Q12734">
    <property type="interactions" value="145"/>
</dbReference>
<dbReference type="IntAct" id="Q12734">
    <property type="interactions" value="7"/>
</dbReference>
<dbReference type="MINT" id="Q12734"/>
<dbReference type="STRING" id="4932.YPR030W"/>
<dbReference type="iPTMnet" id="Q12734"/>
<dbReference type="PaxDb" id="4932-YPR030W"/>
<dbReference type="PeptideAtlas" id="Q12734"/>
<dbReference type="EnsemblFungi" id="YPR030W_mRNA">
    <property type="protein sequence ID" value="YPR030W"/>
    <property type="gene ID" value="YPR030W"/>
</dbReference>
<dbReference type="GeneID" id="856142"/>
<dbReference type="KEGG" id="sce:YPR030W"/>
<dbReference type="AGR" id="SGD:S000006234"/>
<dbReference type="SGD" id="S000006234">
    <property type="gene designation" value="CSR2"/>
</dbReference>
<dbReference type="VEuPathDB" id="FungiDB:YPR030W"/>
<dbReference type="eggNOG" id="KOG3780">
    <property type="taxonomic scope" value="Eukaryota"/>
</dbReference>
<dbReference type="GeneTree" id="ENSGT00940000176445"/>
<dbReference type="HOGENOM" id="CLU_006239_0_0_1"/>
<dbReference type="InParanoid" id="Q12734"/>
<dbReference type="OMA" id="FITHHAS"/>
<dbReference type="OrthoDB" id="2333384at2759"/>
<dbReference type="BioCyc" id="YEAST:G3O-34189-MONOMER"/>
<dbReference type="Reactome" id="R-SCE-844456">
    <property type="pathway name" value="The NLRP3 inflammasome"/>
</dbReference>
<dbReference type="BioGRID-ORCS" id="856142">
    <property type="hits" value="7 hits in 10 CRISPR screens"/>
</dbReference>
<dbReference type="PRO" id="PR:Q12734"/>
<dbReference type="Proteomes" id="UP000002311">
    <property type="component" value="Chromosome XVI"/>
</dbReference>
<dbReference type="RNAct" id="Q12734">
    <property type="molecule type" value="protein"/>
</dbReference>
<dbReference type="GO" id="GO:0005737">
    <property type="term" value="C:cytoplasm"/>
    <property type="evidence" value="ECO:0000318"/>
    <property type="project" value="GO_Central"/>
</dbReference>
<dbReference type="GO" id="GO:0005829">
    <property type="term" value="C:cytosol"/>
    <property type="evidence" value="ECO:0007005"/>
    <property type="project" value="SGD"/>
</dbReference>
<dbReference type="GO" id="GO:0005634">
    <property type="term" value="C:nucleus"/>
    <property type="evidence" value="ECO:0000314"/>
    <property type="project" value="SGD"/>
</dbReference>
<dbReference type="GO" id="GO:0030674">
    <property type="term" value="F:protein-macromolecule adaptor activity"/>
    <property type="evidence" value="ECO:0000318"/>
    <property type="project" value="GO_Central"/>
</dbReference>
<dbReference type="GO" id="GO:0031625">
    <property type="term" value="F:ubiquitin protein ligase binding"/>
    <property type="evidence" value="ECO:0000353"/>
    <property type="project" value="SGD"/>
</dbReference>
<dbReference type="GO" id="GO:0031505">
    <property type="term" value="P:fungal-type cell wall organization"/>
    <property type="evidence" value="ECO:0000316"/>
    <property type="project" value="SGD"/>
</dbReference>
<dbReference type="GO" id="GO:0006357">
    <property type="term" value="P:regulation of transcription by RNA polymerase II"/>
    <property type="evidence" value="ECO:0000315"/>
    <property type="project" value="SGD"/>
</dbReference>
<dbReference type="GO" id="GO:0070086">
    <property type="term" value="P:ubiquitin-dependent endocytosis"/>
    <property type="evidence" value="ECO:0000247"/>
    <property type="project" value="SGD"/>
</dbReference>
<dbReference type="Gene3D" id="2.60.40.640">
    <property type="match status" value="1"/>
</dbReference>
<dbReference type="InterPro" id="IPR014752">
    <property type="entry name" value="Arrestin-like_C"/>
</dbReference>
<dbReference type="InterPro" id="IPR011022">
    <property type="entry name" value="Arrestin_C-like"/>
</dbReference>
<dbReference type="InterPro" id="IPR050357">
    <property type="entry name" value="Arrestin_domain-protein"/>
</dbReference>
<dbReference type="PANTHER" id="PTHR11188">
    <property type="entry name" value="ARRESTIN DOMAIN CONTAINING PROTEIN"/>
    <property type="match status" value="1"/>
</dbReference>
<dbReference type="PANTHER" id="PTHR11188:SF168">
    <property type="entry name" value="PROTEIN ECM21-RELATED"/>
    <property type="match status" value="1"/>
</dbReference>
<dbReference type="SMART" id="SM01017">
    <property type="entry name" value="Arrestin_C"/>
    <property type="match status" value="1"/>
</dbReference>
<sequence length="1121" mass="124849">MQSTVPIAIASNGNKRDVVQNVSAGDEGDILQRLARNREMISTSLSPQKSSGFSGRRRSSSVRDALSSFFGTGNSPTSSMDDYSNLMNRNYSTASTAMCRGNSFPSDVGTKAYNITGSYQPDRHRNSVPYTTIDQLHTRQDTGLRRESDPVAAKQISSNNDIVRSFITHHASNSTMFINRVLSDYLADRGFIKQTPLYNKKSVLEISIATSAESVFLPTTKSDETEYLSLIHGSLNQARTQPVGSTNTAESDFLPSCPTMDTLNENNDLSLFPLHTQRTSPSNTARTGNAMDTSNSDRASPASNNNTTDADSFVASGNNNPMNNNNSPARNRHPNSHSRSLPNAWNSQMPSFSFALIFSLNKSTTLSDIKVELTSNVRVVWFNGLPPTKNVNEECYNIGSLDWTLNADNFNLFIPQGAKSPLDIVENHSNNRKLKVLQKLSMRKRRSFSNKAVLRENILNNLNASNSTNKLNAGVYVFTIPIVLASRIPESLYYPSARVSYSLRLATKLKDEHTQLVASRPRSSSISSPQKLRSYSCSDSYEYSQIDDTIEGETYNNDKNSTGKIAFPSSWLKSAKGRLKRNNSNGRSDNNGASSSGLAMQHDSEDTINLQYPLNLVRTPPEISVTTANKPLYINKVWENCLSYEISFAQKYVPLNGEIPITIKVAPLVKSLSVKRIRVSCREKISYRSKDYQYDFDQLDPLASDPCNPYHMRYLVRKKKDRSLPLFEVASKCTSGPSIREEVVTNTVDDNLLAYTSSKENNKDIPFSESFTVKTKLKFPKYCEVDATKAASLPPYGIDLFDPIKDPTQSENTSNNGNVLGFLVGRPNRASKTVHKIPQDKNHNEVNDTNGNSNTSLQTSSNVPIQHYTRLNKPRRGLYLDSMHFKNIQCSHKLEIVLRVSKTDSGSSKIIRHYEVIVDTPIYLISDLCNTSNIDLPTYDMATTESSKVLPPTFEEATSVSASPRSSVSYYPDDISMQQLNLSRSTSLANGYLSTLHPKTTAVSDSSNGAPIRDQQEQQARPLRTEDYALQMGNENNAYSNMDGLLSQDIFEQETAATLFKRDIVTMNFNNNIFTPRYSPRTFTNTDYNYNDNDNNDNDTEGPGPIIHPGPEPPRYDEISS</sequence>
<comment type="function">
    <text evidence="2 3 4 7 8">Transcription factor involved in the regulation of fermentation and aerobic oxidation. Acts as a repressor of CYC1, which is involved in electron flow through the mitochondria under aerobic condition. Required for pseudohyphal formation upon nitrogen starvation. May be involved in viability at stationary phase and aging.</text>
</comment>
<comment type="interaction">
    <interactant intactId="EBI-32379">
        <id>Q12734</id>
    </interactant>
    <interactant intactId="EBI-16219">
        <id>P39940</id>
        <label>RSP5</label>
    </interactant>
    <organismsDiffer>false</organismsDiffer>
    <experiments>2</experiments>
</comment>
<comment type="subcellular location">
    <subcellularLocation>
        <location evidence="4">Cytoplasm</location>
    </subcellularLocation>
    <subcellularLocation>
        <location evidence="4">Nucleus</location>
    </subcellularLocation>
</comment>
<comment type="induction">
    <text evidence="4 7">Repressed by glucose and increased expression upon nitrogen depletion.</text>
</comment>
<comment type="PTM">
    <text evidence="6">Phosphorylated by CDC28.</text>
</comment>
<comment type="similarity">
    <text evidence="9">Belongs to the CSR2 family.</text>
</comment>
<protein>
    <recommendedName>
        <fullName>Transcription factor CSR2</fullName>
    </recommendedName>
    <alternativeName>
        <fullName>CHS5 SPA2 rescue protein 2</fullName>
    </alternativeName>
</protein>
<feature type="chain" id="PRO_0000228156" description="Transcription factor CSR2">
    <location>
        <begin position="1"/>
        <end position="1121"/>
    </location>
</feature>
<feature type="region of interest" description="Disordered" evidence="1">
    <location>
        <begin position="273"/>
        <end position="342"/>
    </location>
</feature>
<feature type="region of interest" description="Disordered" evidence="1">
    <location>
        <begin position="513"/>
        <end position="532"/>
    </location>
</feature>
<feature type="region of interest" description="Disordered" evidence="1">
    <location>
        <begin position="579"/>
        <end position="600"/>
    </location>
</feature>
<feature type="region of interest" description="Disordered" evidence="1">
    <location>
        <begin position="837"/>
        <end position="860"/>
    </location>
</feature>
<feature type="region of interest" description="Disordered" evidence="1">
    <location>
        <begin position="999"/>
        <end position="1022"/>
    </location>
</feature>
<feature type="region of interest" description="Disordered" evidence="1">
    <location>
        <begin position="1075"/>
        <end position="1121"/>
    </location>
</feature>
<feature type="compositionally biased region" description="Polar residues" evidence="1">
    <location>
        <begin position="276"/>
        <end position="310"/>
    </location>
</feature>
<feature type="compositionally biased region" description="Low complexity" evidence="1">
    <location>
        <begin position="318"/>
        <end position="329"/>
    </location>
</feature>
<feature type="compositionally biased region" description="Low complexity" evidence="1">
    <location>
        <begin position="519"/>
        <end position="529"/>
    </location>
</feature>
<feature type="compositionally biased region" description="Low complexity" evidence="1">
    <location>
        <begin position="582"/>
        <end position="597"/>
    </location>
</feature>
<feature type="compositionally biased region" description="Basic and acidic residues" evidence="1">
    <location>
        <begin position="837"/>
        <end position="846"/>
    </location>
</feature>
<feature type="compositionally biased region" description="Polar residues" evidence="1">
    <location>
        <begin position="847"/>
        <end position="860"/>
    </location>
</feature>
<feature type="compositionally biased region" description="Polar residues" evidence="1">
    <location>
        <begin position="999"/>
        <end position="1009"/>
    </location>
</feature>
<feature type="compositionally biased region" description="Low complexity" evidence="1">
    <location>
        <begin position="1084"/>
        <end position="1093"/>
    </location>
</feature>
<feature type="modified residue" description="Phosphoserine" evidence="10">
    <location>
        <position position="23"/>
    </location>
</feature>
<feature type="modified residue" description="Phosphoserine" evidence="10">
    <location>
        <position position="46"/>
    </location>
</feature>
<feature type="modified residue" description="Phosphoserine" evidence="10">
    <location>
        <position position="127"/>
    </location>
</feature>
<feature type="modified residue" description="Phosphoserine" evidence="10">
    <location>
        <position position="327"/>
    </location>
</feature>
<feature type="modified residue" description="Phosphoserine" evidence="10">
    <location>
        <position position="987"/>
    </location>
</feature>
<feature type="cross-link" description="Glycyl lysine isopeptide (Lys-Gly) (interchain with G-Cter in ubiquitin)" evidence="5">
    <location>
        <position position="841"/>
    </location>
</feature>
<gene>
    <name type="primary">CSR2</name>
    <name type="synonym">MRG19</name>
    <name type="ordered locus">YPR030W</name>
    <name type="ORF">YP9367.10</name>
</gene>
<evidence type="ECO:0000256" key="1">
    <source>
        <dbReference type="SAM" id="MobiDB-lite"/>
    </source>
</evidence>
<evidence type="ECO:0000269" key="2">
    <source>
    </source>
</evidence>
<evidence type="ECO:0000269" key="3">
    <source>
    </source>
</evidence>
<evidence type="ECO:0000269" key="4">
    <source>
    </source>
</evidence>
<evidence type="ECO:0000269" key="5">
    <source>
    </source>
</evidence>
<evidence type="ECO:0000269" key="6">
    <source>
    </source>
</evidence>
<evidence type="ECO:0000269" key="7">
    <source>
    </source>
</evidence>
<evidence type="ECO:0000269" key="8">
    <source>
    </source>
</evidence>
<evidence type="ECO:0000305" key="9"/>
<evidence type="ECO:0007744" key="10">
    <source>
    </source>
</evidence>
<organism>
    <name type="scientific">Saccharomyces cerevisiae (strain ATCC 204508 / S288c)</name>
    <name type="common">Baker's yeast</name>
    <dbReference type="NCBI Taxonomy" id="559292"/>
    <lineage>
        <taxon>Eukaryota</taxon>
        <taxon>Fungi</taxon>
        <taxon>Dikarya</taxon>
        <taxon>Ascomycota</taxon>
        <taxon>Saccharomycotina</taxon>
        <taxon>Saccharomycetes</taxon>
        <taxon>Saccharomycetales</taxon>
        <taxon>Saccharomycetaceae</taxon>
        <taxon>Saccharomyces</taxon>
    </lineage>
</organism>
<name>CSR2_YEAST</name>
<proteinExistence type="evidence at protein level"/>
<accession>Q12734</accession>
<accession>D6W440</accession>
<keyword id="KW-0963">Cytoplasm</keyword>
<keyword id="KW-1017">Isopeptide bond</keyword>
<keyword id="KW-0539">Nucleus</keyword>
<keyword id="KW-0597">Phosphoprotein</keyword>
<keyword id="KW-1185">Reference proteome</keyword>
<keyword id="KW-0678">Repressor</keyword>
<keyword id="KW-0804">Transcription</keyword>
<keyword id="KW-0805">Transcription regulation</keyword>
<keyword id="KW-0832">Ubl conjugation</keyword>